<feature type="chain" id="PRO_0000175482" description="DNA-directed RNA polymerase subunit alpha">
    <location>
        <begin position="1"/>
        <end position="335"/>
    </location>
</feature>
<feature type="region of interest" description="Alpha N-terminal domain (alpha-NTD)" evidence="1">
    <location>
        <begin position="1"/>
        <end position="233"/>
    </location>
</feature>
<feature type="region of interest" description="Alpha C-terminal domain (alpha-CTD)" evidence="1">
    <location>
        <begin position="264"/>
        <end position="335"/>
    </location>
</feature>
<protein>
    <recommendedName>
        <fullName evidence="1">DNA-directed RNA polymerase subunit alpha</fullName>
        <shortName evidence="1">PEP</shortName>
        <ecNumber evidence="1">2.7.7.6</ecNumber>
    </recommendedName>
    <alternativeName>
        <fullName evidence="1">Plastid-encoded RNA polymerase subunit alpha</fullName>
        <shortName evidence="1">RNA polymerase subunit alpha</shortName>
    </alternativeName>
</protein>
<dbReference type="EC" id="2.7.7.6" evidence="1"/>
<dbReference type="EMBL" id="D17510">
    <property type="protein sequence ID" value="BAA04395.1"/>
    <property type="molecule type" value="Genomic_DNA"/>
</dbReference>
<dbReference type="PIR" id="T07517">
    <property type="entry name" value="T07517"/>
</dbReference>
<dbReference type="RefSeq" id="NP_042438.1">
    <property type="nucleotide sequence ID" value="NC_001631.1"/>
</dbReference>
<dbReference type="SMR" id="P41629"/>
<dbReference type="GeneID" id="809011"/>
<dbReference type="GO" id="GO:0009507">
    <property type="term" value="C:chloroplast"/>
    <property type="evidence" value="ECO:0007669"/>
    <property type="project" value="UniProtKB-SubCell"/>
</dbReference>
<dbReference type="GO" id="GO:0000428">
    <property type="term" value="C:DNA-directed RNA polymerase complex"/>
    <property type="evidence" value="ECO:0007669"/>
    <property type="project" value="UniProtKB-KW"/>
</dbReference>
<dbReference type="GO" id="GO:0005739">
    <property type="term" value="C:mitochondrion"/>
    <property type="evidence" value="ECO:0007669"/>
    <property type="project" value="GOC"/>
</dbReference>
<dbReference type="GO" id="GO:0003677">
    <property type="term" value="F:DNA binding"/>
    <property type="evidence" value="ECO:0007669"/>
    <property type="project" value="UniProtKB-UniRule"/>
</dbReference>
<dbReference type="GO" id="GO:0003899">
    <property type="term" value="F:DNA-directed RNA polymerase activity"/>
    <property type="evidence" value="ECO:0007669"/>
    <property type="project" value="UniProtKB-UniRule"/>
</dbReference>
<dbReference type="GO" id="GO:0046983">
    <property type="term" value="F:protein dimerization activity"/>
    <property type="evidence" value="ECO:0007669"/>
    <property type="project" value="InterPro"/>
</dbReference>
<dbReference type="GO" id="GO:0006351">
    <property type="term" value="P:DNA-templated transcription"/>
    <property type="evidence" value="ECO:0007669"/>
    <property type="project" value="UniProtKB-UniRule"/>
</dbReference>
<dbReference type="CDD" id="cd06928">
    <property type="entry name" value="RNAP_alpha_NTD"/>
    <property type="match status" value="1"/>
</dbReference>
<dbReference type="FunFam" id="2.170.120.12:FF:000001">
    <property type="entry name" value="DNA-directed RNA polymerase subunit alpha"/>
    <property type="match status" value="1"/>
</dbReference>
<dbReference type="Gene3D" id="1.10.150.20">
    <property type="entry name" value="5' to 3' exonuclease, C-terminal subdomain"/>
    <property type="match status" value="1"/>
</dbReference>
<dbReference type="Gene3D" id="2.170.120.12">
    <property type="entry name" value="DNA-directed RNA polymerase, insert domain"/>
    <property type="match status" value="1"/>
</dbReference>
<dbReference type="Gene3D" id="3.30.1360.10">
    <property type="entry name" value="RNA polymerase, RBP11-like subunit"/>
    <property type="match status" value="1"/>
</dbReference>
<dbReference type="HAMAP" id="MF_00059">
    <property type="entry name" value="RNApol_bact_RpoA"/>
    <property type="match status" value="1"/>
</dbReference>
<dbReference type="InterPro" id="IPR011262">
    <property type="entry name" value="DNA-dir_RNA_pol_insert"/>
</dbReference>
<dbReference type="InterPro" id="IPR011263">
    <property type="entry name" value="DNA-dir_RNA_pol_RpoA/D/Rpb3"/>
</dbReference>
<dbReference type="InterPro" id="IPR011773">
    <property type="entry name" value="DNA-dir_RpoA"/>
</dbReference>
<dbReference type="InterPro" id="IPR036603">
    <property type="entry name" value="RBP11-like"/>
</dbReference>
<dbReference type="InterPro" id="IPR011260">
    <property type="entry name" value="RNAP_asu_C"/>
</dbReference>
<dbReference type="InterPro" id="IPR036643">
    <property type="entry name" value="RNApol_insert_sf"/>
</dbReference>
<dbReference type="NCBIfam" id="TIGR02027">
    <property type="entry name" value="rpoA"/>
    <property type="match status" value="1"/>
</dbReference>
<dbReference type="Pfam" id="PF01000">
    <property type="entry name" value="RNA_pol_A_bac"/>
    <property type="match status" value="1"/>
</dbReference>
<dbReference type="Pfam" id="PF03118">
    <property type="entry name" value="RNA_pol_A_CTD"/>
    <property type="match status" value="1"/>
</dbReference>
<dbReference type="Pfam" id="PF01193">
    <property type="entry name" value="RNA_pol_L"/>
    <property type="match status" value="1"/>
</dbReference>
<dbReference type="SMART" id="SM00662">
    <property type="entry name" value="RPOLD"/>
    <property type="match status" value="1"/>
</dbReference>
<dbReference type="SUPFAM" id="SSF47789">
    <property type="entry name" value="C-terminal domain of RNA polymerase alpha subunit"/>
    <property type="match status" value="1"/>
</dbReference>
<dbReference type="SUPFAM" id="SSF56553">
    <property type="entry name" value="Insert subdomain of RNA polymerase alpha subunit"/>
    <property type="match status" value="1"/>
</dbReference>
<dbReference type="SUPFAM" id="SSF55257">
    <property type="entry name" value="RBP11-like subunits of RNA polymerase"/>
    <property type="match status" value="1"/>
</dbReference>
<gene>
    <name evidence="1" type="primary">rpoA</name>
</gene>
<evidence type="ECO:0000255" key="1">
    <source>
        <dbReference type="HAMAP-Rule" id="MF_00059"/>
    </source>
</evidence>
<comment type="function">
    <text evidence="1">DNA-dependent RNA polymerase catalyzes the transcription of DNA into RNA using the four ribonucleoside triphosphates as substrates.</text>
</comment>
<comment type="catalytic activity">
    <reaction evidence="1">
        <text>RNA(n) + a ribonucleoside 5'-triphosphate = RNA(n+1) + diphosphate</text>
        <dbReference type="Rhea" id="RHEA:21248"/>
        <dbReference type="Rhea" id="RHEA-COMP:14527"/>
        <dbReference type="Rhea" id="RHEA-COMP:17342"/>
        <dbReference type="ChEBI" id="CHEBI:33019"/>
        <dbReference type="ChEBI" id="CHEBI:61557"/>
        <dbReference type="ChEBI" id="CHEBI:140395"/>
        <dbReference type="EC" id="2.7.7.6"/>
    </reaction>
</comment>
<comment type="subunit">
    <text evidence="1">In plastids the minimal PEP RNA polymerase catalytic core is composed of four subunits: alpha, beta, beta', and beta''. When a (nuclear-encoded) sigma factor is associated with the core the holoenzyme is formed, which can initiate transcription.</text>
</comment>
<comment type="subcellular location">
    <subcellularLocation>
        <location>Plastid</location>
        <location>Chloroplast</location>
    </subcellularLocation>
</comment>
<comment type="domain">
    <text evidence="1">The N-terminal domain is essential for RNAP assembly and basal transcription, whereas the C-terminal domain is involved in interaction with transcriptional regulators and with upstream promoter elements.</text>
</comment>
<comment type="similarity">
    <text evidence="1">Belongs to the RNA polymerase alpha chain family.</text>
</comment>
<proteinExistence type="inferred from homology"/>
<reference key="1">
    <citation type="journal article" date="1994" name="Proc. Natl. Acad. Sci. U.S.A.">
        <title>Loss of all ndh genes as determined by sequencing the entire chloroplast genome of the black pine Pinus thunbergii.</title>
        <authorList>
            <person name="Wakasugi T."/>
            <person name="Tsudzuki J."/>
            <person name="Ito S."/>
            <person name="Nakashima K."/>
            <person name="Tsudzuki T."/>
            <person name="Sugiura M."/>
        </authorList>
    </citation>
    <scope>NUCLEOTIDE SEQUENCE [LARGE SCALE GENOMIC DNA]</scope>
</reference>
<organism>
    <name type="scientific">Pinus thunbergii</name>
    <name type="common">Japanese black pine</name>
    <name type="synonym">Pinus thunbergiana</name>
    <dbReference type="NCBI Taxonomy" id="3350"/>
    <lineage>
        <taxon>Eukaryota</taxon>
        <taxon>Viridiplantae</taxon>
        <taxon>Streptophyta</taxon>
        <taxon>Embryophyta</taxon>
        <taxon>Tracheophyta</taxon>
        <taxon>Spermatophyta</taxon>
        <taxon>Pinopsida</taxon>
        <taxon>Pinidae</taxon>
        <taxon>Conifers I</taxon>
        <taxon>Pinales</taxon>
        <taxon>Pinaceae</taxon>
        <taxon>Pinus</taxon>
        <taxon>Pinus subgen. Pinus</taxon>
    </lineage>
</organism>
<sequence>MIRDEISVSIQTLRWKCIESRAYSKRLHYGRFALSPLHKGRADTIGIAMRRALLGEVEGTCITRVKLENIKHEYSAIIGIEESVHDILMNLKEIVFRSDSYGIREASIYIVGPRNVTAQDIILPPSVKIIDTTQHIARLTKSITSDIRLQIEKNRGYIIHSPNNYQDGIFPIDAVFMPVRDANYSIHSYGSGNEIREVLFLEIWTNGGLTPREALYEASRNLIDLFIPFLHGEEQNIDGMNNKKGSNMLPFPLSHVLTDTGETKEKIAFQLIFIDQLELPPKTYNSLRRANIHTLLDLLNYSREDLMRIEHFGKESVEQVLEVLQKLFAIDPPRN</sequence>
<geneLocation type="chloroplast"/>
<name>RPOA_PINTH</name>
<keyword id="KW-0150">Chloroplast</keyword>
<keyword id="KW-0240">DNA-directed RNA polymerase</keyword>
<keyword id="KW-0548">Nucleotidyltransferase</keyword>
<keyword id="KW-0934">Plastid</keyword>
<keyword id="KW-0804">Transcription</keyword>
<keyword id="KW-0808">Transferase</keyword>
<accession>P41629</accession>